<evidence type="ECO:0000250" key="1">
    <source>
        <dbReference type="UniProtKB" id="P11064"/>
    </source>
</evidence>
<evidence type="ECO:0000250" key="2">
    <source>
        <dbReference type="UniProtKB" id="P24666"/>
    </source>
</evidence>
<evidence type="ECO:0000305" key="3"/>
<organism>
    <name type="scientific">Pongo abelii</name>
    <name type="common">Sumatran orangutan</name>
    <name type="synonym">Pongo pygmaeus abelii</name>
    <dbReference type="NCBI Taxonomy" id="9601"/>
    <lineage>
        <taxon>Eukaryota</taxon>
        <taxon>Metazoa</taxon>
        <taxon>Chordata</taxon>
        <taxon>Craniata</taxon>
        <taxon>Vertebrata</taxon>
        <taxon>Euteleostomi</taxon>
        <taxon>Mammalia</taxon>
        <taxon>Eutheria</taxon>
        <taxon>Euarchontoglires</taxon>
        <taxon>Primates</taxon>
        <taxon>Haplorrhini</taxon>
        <taxon>Catarrhini</taxon>
        <taxon>Hominidae</taxon>
        <taxon>Pongo</taxon>
    </lineage>
</organism>
<sequence>MAEQSTKSVLFVCLGNICRSPIAEAVFRKLVTDQNISENWRVDSAATSGYEIGNPPDYRGQSCMKRHGIPMSHVARQITREDFATFDYILCMDESNLRDLNRKSNQVKTCKAKIELLGSYDPQKQLIIEDPYYGNDSDFETVYQQCVRCCRAFLEKAH</sequence>
<dbReference type="EC" id="3.1.3.48" evidence="2"/>
<dbReference type="EC" id="3.1.3.2" evidence="2"/>
<dbReference type="EMBL" id="CR857496">
    <property type="protein sequence ID" value="CAH89780.1"/>
    <property type="molecule type" value="mRNA"/>
</dbReference>
<dbReference type="RefSeq" id="NP_001124815.1">
    <property type="nucleotide sequence ID" value="NM_001131343.1"/>
</dbReference>
<dbReference type="BMRB" id="Q5REM7"/>
<dbReference type="SMR" id="Q5REM7"/>
<dbReference type="FunCoup" id="Q5REM7">
    <property type="interactions" value="1029"/>
</dbReference>
<dbReference type="STRING" id="9601.ENSPPYP00000014169"/>
<dbReference type="Ensembl" id="ENSPPYT00000058335.1">
    <property type="protein sequence ID" value="ENSPPYP00000035868.1"/>
    <property type="gene ID" value="ENSPPYG00000012694.3"/>
</dbReference>
<dbReference type="GeneID" id="100171673"/>
<dbReference type="KEGG" id="pon:100171673"/>
<dbReference type="CTD" id="52"/>
<dbReference type="eggNOG" id="KOG3217">
    <property type="taxonomic scope" value="Eukaryota"/>
</dbReference>
<dbReference type="GeneTree" id="ENSGT00940000158351"/>
<dbReference type="HOGENOM" id="CLU_071415_2_0_1"/>
<dbReference type="InParanoid" id="Q5REM7"/>
<dbReference type="OrthoDB" id="3388at2759"/>
<dbReference type="Proteomes" id="UP000001595">
    <property type="component" value="Chromosome 2A"/>
</dbReference>
<dbReference type="GO" id="GO:0005737">
    <property type="term" value="C:cytoplasm"/>
    <property type="evidence" value="ECO:0007669"/>
    <property type="project" value="UniProtKB-SubCell"/>
</dbReference>
<dbReference type="GO" id="GO:0003993">
    <property type="term" value="F:acid phosphatase activity"/>
    <property type="evidence" value="ECO:0000250"/>
    <property type="project" value="UniProtKB"/>
</dbReference>
<dbReference type="GO" id="GO:0004726">
    <property type="term" value="F:non-membrane spanning protein tyrosine phosphatase activity"/>
    <property type="evidence" value="ECO:0007669"/>
    <property type="project" value="InterPro"/>
</dbReference>
<dbReference type="GO" id="GO:0004725">
    <property type="term" value="F:protein tyrosine phosphatase activity"/>
    <property type="evidence" value="ECO:0000250"/>
    <property type="project" value="UniProtKB"/>
</dbReference>
<dbReference type="CDD" id="cd16343">
    <property type="entry name" value="LMWPTP"/>
    <property type="match status" value="1"/>
</dbReference>
<dbReference type="FunFam" id="3.40.50.2300:FF:000105">
    <property type="entry name" value="Low molecular weight phosphotyrosine protein"/>
    <property type="match status" value="1"/>
</dbReference>
<dbReference type="Gene3D" id="3.40.50.2300">
    <property type="match status" value="1"/>
</dbReference>
<dbReference type="InterPro" id="IPR050438">
    <property type="entry name" value="LMW_PTPase"/>
</dbReference>
<dbReference type="InterPro" id="IPR023485">
    <property type="entry name" value="Ptyr_pPase"/>
</dbReference>
<dbReference type="InterPro" id="IPR036196">
    <property type="entry name" value="Ptyr_pPase_sf"/>
</dbReference>
<dbReference type="InterPro" id="IPR002115">
    <property type="entry name" value="Tyr_Pase_low_mol_wt_mml"/>
</dbReference>
<dbReference type="InterPro" id="IPR017867">
    <property type="entry name" value="Tyr_phospatase_low_mol_wt"/>
</dbReference>
<dbReference type="PANTHER" id="PTHR11717:SF34">
    <property type="entry name" value="LOW MOLECULAR WEIGHT PHOSPHOTYROSINE PROTEIN PHOSPHATASE"/>
    <property type="match status" value="1"/>
</dbReference>
<dbReference type="PANTHER" id="PTHR11717">
    <property type="entry name" value="LOW MOLECULAR WEIGHT PROTEIN TYROSINE PHOSPHATASE"/>
    <property type="match status" value="1"/>
</dbReference>
<dbReference type="Pfam" id="PF01451">
    <property type="entry name" value="LMWPc"/>
    <property type="match status" value="1"/>
</dbReference>
<dbReference type="PRINTS" id="PR00719">
    <property type="entry name" value="LMWPTPASE"/>
</dbReference>
<dbReference type="PRINTS" id="PR00720">
    <property type="entry name" value="MAMMALPTPASE"/>
</dbReference>
<dbReference type="SMART" id="SM00226">
    <property type="entry name" value="LMWPc"/>
    <property type="match status" value="1"/>
</dbReference>
<dbReference type="SUPFAM" id="SSF52788">
    <property type="entry name" value="Phosphotyrosine protein phosphatases I"/>
    <property type="match status" value="1"/>
</dbReference>
<comment type="function">
    <text evidence="2">Acts on tyrosine phosphorylated proteins, low-MW aryl phosphates and natural and synthetic acyl phosphates with differences in substrate specificity between isoform 1 and isoform 2.</text>
</comment>
<comment type="catalytic activity">
    <reaction evidence="2">
        <text>O-phospho-L-tyrosyl-[protein] + H2O = L-tyrosyl-[protein] + phosphate</text>
        <dbReference type="Rhea" id="RHEA:10684"/>
        <dbReference type="Rhea" id="RHEA-COMP:10136"/>
        <dbReference type="Rhea" id="RHEA-COMP:20101"/>
        <dbReference type="ChEBI" id="CHEBI:15377"/>
        <dbReference type="ChEBI" id="CHEBI:43474"/>
        <dbReference type="ChEBI" id="CHEBI:46858"/>
        <dbReference type="ChEBI" id="CHEBI:61978"/>
        <dbReference type="EC" id="3.1.3.48"/>
    </reaction>
    <physiologicalReaction direction="left-to-right" evidence="2">
        <dbReference type="Rhea" id="RHEA:10685"/>
    </physiologicalReaction>
</comment>
<comment type="catalytic activity">
    <reaction evidence="2">
        <text>a phosphate monoester + H2O = an alcohol + phosphate</text>
        <dbReference type="Rhea" id="RHEA:15017"/>
        <dbReference type="ChEBI" id="CHEBI:15377"/>
        <dbReference type="ChEBI" id="CHEBI:30879"/>
        <dbReference type="ChEBI" id="CHEBI:43474"/>
        <dbReference type="ChEBI" id="CHEBI:67140"/>
        <dbReference type="EC" id="3.1.3.2"/>
    </reaction>
    <physiologicalReaction direction="left-to-right" evidence="2">
        <dbReference type="Rhea" id="RHEA:15018"/>
    </physiologicalReaction>
</comment>
<comment type="activity regulation">
    <text evidence="2">Inhibited by sulfhydryl reagents.</text>
</comment>
<comment type="subunit">
    <text evidence="2">Interacts with EPHA2; dephosphorylates EPHA2. Interacts with EPHB1. Interacts with the SH3 domain of SPTAN1.</text>
</comment>
<comment type="subcellular location">
    <subcellularLocation>
        <location evidence="2">Cytoplasm</location>
    </subcellularLocation>
</comment>
<comment type="PTM">
    <text evidence="2">Phosphorylated by LCK. Phosphorylation at Tyr-132 increases its phosphatase activity.</text>
</comment>
<comment type="similarity">
    <text evidence="3">Belongs to the low molecular weight phosphotyrosine protein phosphatase family.</text>
</comment>
<protein>
    <recommendedName>
        <fullName evidence="3">Low molecular weight phosphotyrosine protein phosphatase</fullName>
        <shortName>LMW-PTP</shortName>
        <shortName>LMW-PTPase</shortName>
        <ecNumber evidence="2">3.1.3.48</ecNumber>
    </recommendedName>
    <alternativeName>
        <fullName>Low molecular weight cytosolic acid phosphatase</fullName>
        <ecNumber evidence="2">3.1.3.2</ecNumber>
    </alternativeName>
</protein>
<accession>Q5REM7</accession>
<feature type="initiator methionine" description="Removed" evidence="1">
    <location>
        <position position="1"/>
    </location>
</feature>
<feature type="chain" id="PRO_0000256845" description="Low molecular weight phosphotyrosine protein phosphatase">
    <location>
        <begin position="2"/>
        <end position="158"/>
    </location>
</feature>
<feature type="active site" description="Nucleophile" evidence="1">
    <location>
        <position position="13"/>
    </location>
</feature>
<feature type="active site" evidence="1">
    <location>
        <position position="19"/>
    </location>
</feature>
<feature type="active site" description="Proton donor" evidence="1">
    <location>
        <position position="130"/>
    </location>
</feature>
<feature type="modified residue" description="N-acetylalanine" evidence="1">
    <location>
        <position position="2"/>
    </location>
</feature>
<feature type="modified residue" description="Phosphotyrosine" evidence="2">
    <location>
        <position position="132"/>
    </location>
</feature>
<feature type="modified residue" description="Phosphotyrosine" evidence="2">
    <location>
        <position position="133"/>
    </location>
</feature>
<name>PPAC_PONAB</name>
<gene>
    <name type="primary">ACP1</name>
</gene>
<reference key="1">
    <citation type="submission" date="2004-11" db="EMBL/GenBank/DDBJ databases">
        <authorList>
            <consortium name="The German cDNA consortium"/>
        </authorList>
    </citation>
    <scope>NUCLEOTIDE SEQUENCE [LARGE SCALE MRNA]</scope>
    <source>
        <tissue>Heart</tissue>
    </source>
</reference>
<proteinExistence type="evidence at transcript level"/>
<keyword id="KW-0007">Acetylation</keyword>
<keyword id="KW-0963">Cytoplasm</keyword>
<keyword id="KW-0378">Hydrolase</keyword>
<keyword id="KW-0597">Phosphoprotein</keyword>
<keyword id="KW-0904">Protein phosphatase</keyword>
<keyword id="KW-1185">Reference proteome</keyword>